<accession>A0K4U0</accession>
<name>MIAA_BURCH</name>
<sequence>MSASSQSRPTTIACLLGPTASGKTAAALALAARRPIEIVSVDSALVYRDMDIGTAKPSREERASVPHHLIDIIDPADAYSAAEFRADTLRLIGEIVARGRTPLLAGGTMLYYKALTQGLNDLPGADPEVRAALDADAARDGWPALHARLAQVDPDTAARLAPNDSQRIQRALEIFMLSGQPMSALLAAPRRTDDAAAAYRFVPVALEPSDRAVLHTRIAQRFDAMLDAGFIDEVERLRRRDDLHPDLPSMRCVGYRQAWEYLDGDTDYRTMRDKGIFATRQLCKRQITWLRAMPERIVVDCIAPDATARALDALERVLDGRTPD</sequence>
<dbReference type="EC" id="2.5.1.75" evidence="1"/>
<dbReference type="EMBL" id="CP000458">
    <property type="protein sequence ID" value="ABK07517.1"/>
    <property type="molecule type" value="Genomic_DNA"/>
</dbReference>
<dbReference type="RefSeq" id="WP_011544648.1">
    <property type="nucleotide sequence ID" value="NC_008542.1"/>
</dbReference>
<dbReference type="SMR" id="A0K4U0"/>
<dbReference type="KEGG" id="bch:Bcen2424_0764"/>
<dbReference type="HOGENOM" id="CLU_032616_0_0_4"/>
<dbReference type="GO" id="GO:0005524">
    <property type="term" value="F:ATP binding"/>
    <property type="evidence" value="ECO:0007669"/>
    <property type="project" value="UniProtKB-UniRule"/>
</dbReference>
<dbReference type="GO" id="GO:0052381">
    <property type="term" value="F:tRNA dimethylallyltransferase activity"/>
    <property type="evidence" value="ECO:0007669"/>
    <property type="project" value="UniProtKB-UniRule"/>
</dbReference>
<dbReference type="GO" id="GO:0006400">
    <property type="term" value="P:tRNA modification"/>
    <property type="evidence" value="ECO:0007669"/>
    <property type="project" value="TreeGrafter"/>
</dbReference>
<dbReference type="FunFam" id="1.10.20.140:FF:000001">
    <property type="entry name" value="tRNA dimethylallyltransferase"/>
    <property type="match status" value="1"/>
</dbReference>
<dbReference type="Gene3D" id="1.10.20.140">
    <property type="match status" value="1"/>
</dbReference>
<dbReference type="Gene3D" id="3.40.50.300">
    <property type="entry name" value="P-loop containing nucleotide triphosphate hydrolases"/>
    <property type="match status" value="1"/>
</dbReference>
<dbReference type="HAMAP" id="MF_00185">
    <property type="entry name" value="IPP_trans"/>
    <property type="match status" value="1"/>
</dbReference>
<dbReference type="InterPro" id="IPR039657">
    <property type="entry name" value="Dimethylallyltransferase"/>
</dbReference>
<dbReference type="InterPro" id="IPR018022">
    <property type="entry name" value="IPT"/>
</dbReference>
<dbReference type="InterPro" id="IPR027417">
    <property type="entry name" value="P-loop_NTPase"/>
</dbReference>
<dbReference type="NCBIfam" id="TIGR00174">
    <property type="entry name" value="miaA"/>
    <property type="match status" value="1"/>
</dbReference>
<dbReference type="PANTHER" id="PTHR11088">
    <property type="entry name" value="TRNA DIMETHYLALLYLTRANSFERASE"/>
    <property type="match status" value="1"/>
</dbReference>
<dbReference type="PANTHER" id="PTHR11088:SF60">
    <property type="entry name" value="TRNA DIMETHYLALLYLTRANSFERASE"/>
    <property type="match status" value="1"/>
</dbReference>
<dbReference type="Pfam" id="PF01715">
    <property type="entry name" value="IPPT"/>
    <property type="match status" value="1"/>
</dbReference>
<dbReference type="SUPFAM" id="SSF52540">
    <property type="entry name" value="P-loop containing nucleoside triphosphate hydrolases"/>
    <property type="match status" value="1"/>
</dbReference>
<reference key="1">
    <citation type="submission" date="2006-08" db="EMBL/GenBank/DDBJ databases">
        <title>Complete sequence of chromosome 1 of Burkholderia cenocepacia HI2424.</title>
        <authorList>
            <person name="Copeland A."/>
            <person name="Lucas S."/>
            <person name="Lapidus A."/>
            <person name="Barry K."/>
            <person name="Detter J.C."/>
            <person name="Glavina del Rio T."/>
            <person name="Hammon N."/>
            <person name="Israni S."/>
            <person name="Pitluck S."/>
            <person name="Chain P."/>
            <person name="Malfatti S."/>
            <person name="Shin M."/>
            <person name="Vergez L."/>
            <person name="Schmutz J."/>
            <person name="Larimer F."/>
            <person name="Land M."/>
            <person name="Hauser L."/>
            <person name="Kyrpides N."/>
            <person name="Kim E."/>
            <person name="LiPuma J.J."/>
            <person name="Gonzalez C.F."/>
            <person name="Konstantinidis K."/>
            <person name="Tiedje J.M."/>
            <person name="Richardson P."/>
        </authorList>
    </citation>
    <scope>NUCLEOTIDE SEQUENCE [LARGE SCALE GENOMIC DNA]</scope>
    <source>
        <strain>HI2424</strain>
    </source>
</reference>
<comment type="function">
    <text evidence="1">Catalyzes the transfer of a dimethylallyl group onto the adenine at position 37 in tRNAs that read codons beginning with uridine, leading to the formation of N6-(dimethylallyl)adenosine (i(6)A).</text>
</comment>
<comment type="catalytic activity">
    <reaction evidence="1">
        <text>adenosine(37) in tRNA + dimethylallyl diphosphate = N(6)-dimethylallyladenosine(37) in tRNA + diphosphate</text>
        <dbReference type="Rhea" id="RHEA:26482"/>
        <dbReference type="Rhea" id="RHEA-COMP:10162"/>
        <dbReference type="Rhea" id="RHEA-COMP:10375"/>
        <dbReference type="ChEBI" id="CHEBI:33019"/>
        <dbReference type="ChEBI" id="CHEBI:57623"/>
        <dbReference type="ChEBI" id="CHEBI:74411"/>
        <dbReference type="ChEBI" id="CHEBI:74415"/>
        <dbReference type="EC" id="2.5.1.75"/>
    </reaction>
</comment>
<comment type="cofactor">
    <cofactor evidence="1">
        <name>Mg(2+)</name>
        <dbReference type="ChEBI" id="CHEBI:18420"/>
    </cofactor>
</comment>
<comment type="subunit">
    <text evidence="1">Monomer.</text>
</comment>
<comment type="similarity">
    <text evidence="1">Belongs to the IPP transferase family.</text>
</comment>
<organism>
    <name type="scientific">Burkholderia cenocepacia (strain HI2424)</name>
    <dbReference type="NCBI Taxonomy" id="331272"/>
    <lineage>
        <taxon>Bacteria</taxon>
        <taxon>Pseudomonadati</taxon>
        <taxon>Pseudomonadota</taxon>
        <taxon>Betaproteobacteria</taxon>
        <taxon>Burkholderiales</taxon>
        <taxon>Burkholderiaceae</taxon>
        <taxon>Burkholderia</taxon>
        <taxon>Burkholderia cepacia complex</taxon>
    </lineage>
</organism>
<keyword id="KW-0067">ATP-binding</keyword>
<keyword id="KW-0460">Magnesium</keyword>
<keyword id="KW-0547">Nucleotide-binding</keyword>
<keyword id="KW-0808">Transferase</keyword>
<keyword id="KW-0819">tRNA processing</keyword>
<evidence type="ECO:0000255" key="1">
    <source>
        <dbReference type="HAMAP-Rule" id="MF_00185"/>
    </source>
</evidence>
<gene>
    <name evidence="1" type="primary">miaA</name>
    <name type="ordered locus">Bcen2424_0764</name>
</gene>
<feature type="chain" id="PRO_1000020571" description="tRNA dimethylallyltransferase">
    <location>
        <begin position="1"/>
        <end position="324"/>
    </location>
</feature>
<feature type="region of interest" description="Interaction with substrate tRNA" evidence="1">
    <location>
        <begin position="42"/>
        <end position="45"/>
    </location>
</feature>
<feature type="region of interest" description="Interaction with substrate tRNA" evidence="1">
    <location>
        <begin position="166"/>
        <end position="170"/>
    </location>
</feature>
<feature type="region of interest" description="Interaction with substrate tRNA" evidence="1">
    <location>
        <begin position="251"/>
        <end position="256"/>
    </location>
</feature>
<feature type="region of interest" description="Interaction with substrate tRNA" evidence="1">
    <location>
        <begin position="284"/>
        <end position="291"/>
    </location>
</feature>
<feature type="binding site" evidence="1">
    <location>
        <begin position="17"/>
        <end position="24"/>
    </location>
    <ligand>
        <name>ATP</name>
        <dbReference type="ChEBI" id="CHEBI:30616"/>
    </ligand>
</feature>
<feature type="binding site" evidence="1">
    <location>
        <begin position="19"/>
        <end position="24"/>
    </location>
    <ligand>
        <name>substrate</name>
    </ligand>
</feature>
<feature type="site" description="Interaction with substrate tRNA" evidence="1">
    <location>
        <position position="108"/>
    </location>
</feature>
<feature type="site" description="Interaction with substrate tRNA" evidence="1">
    <location>
        <position position="130"/>
    </location>
</feature>
<protein>
    <recommendedName>
        <fullName evidence="1">tRNA dimethylallyltransferase</fullName>
        <ecNumber evidence="1">2.5.1.75</ecNumber>
    </recommendedName>
    <alternativeName>
        <fullName evidence="1">Dimethylallyl diphosphate:tRNA dimethylallyltransferase</fullName>
        <shortName evidence="1">DMAPP:tRNA dimethylallyltransferase</shortName>
        <shortName evidence="1">DMATase</shortName>
    </alternativeName>
    <alternativeName>
        <fullName evidence="1">Isopentenyl-diphosphate:tRNA isopentenyltransferase</fullName>
        <shortName evidence="1">IPP transferase</shortName>
        <shortName evidence="1">IPPT</shortName>
        <shortName evidence="1">IPTase</shortName>
    </alternativeName>
</protein>
<proteinExistence type="inferred from homology"/>